<reference key="1">
    <citation type="journal article" date="2005" name="J. Bacteriol.">
        <title>Insights on evolution of virulence and resistance from the complete genome analysis of an early methicillin-resistant Staphylococcus aureus strain and a biofilm-producing methicillin-resistant Staphylococcus epidermidis strain.</title>
        <authorList>
            <person name="Gill S.R."/>
            <person name="Fouts D.E."/>
            <person name="Archer G.L."/>
            <person name="Mongodin E.F."/>
            <person name="DeBoy R.T."/>
            <person name="Ravel J."/>
            <person name="Paulsen I.T."/>
            <person name="Kolonay J.F."/>
            <person name="Brinkac L.M."/>
            <person name="Beanan M.J."/>
            <person name="Dodson R.J."/>
            <person name="Daugherty S.C."/>
            <person name="Madupu R."/>
            <person name="Angiuoli S.V."/>
            <person name="Durkin A.S."/>
            <person name="Haft D.H."/>
            <person name="Vamathevan J.J."/>
            <person name="Khouri H."/>
            <person name="Utterback T.R."/>
            <person name="Lee C."/>
            <person name="Dimitrov G."/>
            <person name="Jiang L."/>
            <person name="Qin H."/>
            <person name="Weidman J."/>
            <person name="Tran K."/>
            <person name="Kang K.H."/>
            <person name="Hance I.R."/>
            <person name="Nelson K.E."/>
            <person name="Fraser C.M."/>
        </authorList>
    </citation>
    <scope>NUCLEOTIDE SEQUENCE [LARGE SCALE GENOMIC DNA]</scope>
    <source>
        <strain>ATCC 35984 / DSM 28319 / BCRC 17069 / CCUG 31568 / BM 3577 / RP62A</strain>
    </source>
</reference>
<organism>
    <name type="scientific">Staphylococcus epidermidis (strain ATCC 35984 / DSM 28319 / BCRC 17069 / CCUG 31568 / BM 3577 / RP62A)</name>
    <dbReference type="NCBI Taxonomy" id="176279"/>
    <lineage>
        <taxon>Bacteria</taxon>
        <taxon>Bacillati</taxon>
        <taxon>Bacillota</taxon>
        <taxon>Bacilli</taxon>
        <taxon>Bacillales</taxon>
        <taxon>Staphylococcaceae</taxon>
        <taxon>Staphylococcus</taxon>
    </lineage>
</organism>
<gene>
    <name evidence="1" type="primary">hslU</name>
    <name type="ordered locus">SERP0820</name>
</gene>
<proteinExistence type="inferred from homology"/>
<keyword id="KW-0067">ATP-binding</keyword>
<keyword id="KW-0143">Chaperone</keyword>
<keyword id="KW-0963">Cytoplasm</keyword>
<keyword id="KW-0547">Nucleotide-binding</keyword>
<keyword id="KW-1185">Reference proteome</keyword>
<evidence type="ECO:0000255" key="1">
    <source>
        <dbReference type="HAMAP-Rule" id="MF_00249"/>
    </source>
</evidence>
<evidence type="ECO:0000256" key="2">
    <source>
        <dbReference type="SAM" id="MobiDB-lite"/>
    </source>
</evidence>
<comment type="function">
    <text evidence="1">ATPase subunit of a proteasome-like degradation complex; this subunit has chaperone activity. The binding of ATP and its subsequent hydrolysis by HslU are essential for unfolding of protein substrates subsequently hydrolyzed by HslV. HslU recognizes the N-terminal part of its protein substrates and unfolds these before they are guided to HslV for hydrolysis.</text>
</comment>
<comment type="subunit">
    <text evidence="1">A double ring-shaped homohexamer of HslV is capped on each side by a ring-shaped HslU homohexamer. The assembly of the HslU/HslV complex is dependent on binding of ATP.</text>
</comment>
<comment type="subcellular location">
    <subcellularLocation>
        <location evidence="1">Cytoplasm</location>
    </subcellularLocation>
</comment>
<comment type="similarity">
    <text evidence="1">Belongs to the ClpX chaperone family. HslU subfamily.</text>
</comment>
<accession>Q5HPT8</accession>
<dbReference type="EMBL" id="CP000029">
    <property type="protein sequence ID" value="AAW54166.1"/>
    <property type="molecule type" value="Genomic_DNA"/>
</dbReference>
<dbReference type="RefSeq" id="WP_001829474.1">
    <property type="nucleotide sequence ID" value="NC_002976.3"/>
</dbReference>
<dbReference type="SMR" id="Q5HPT8"/>
<dbReference type="STRING" id="176279.SERP0820"/>
<dbReference type="GeneID" id="50018934"/>
<dbReference type="KEGG" id="ser:SERP0820"/>
<dbReference type="eggNOG" id="COG1220">
    <property type="taxonomic scope" value="Bacteria"/>
</dbReference>
<dbReference type="HOGENOM" id="CLU_033123_0_0_9"/>
<dbReference type="Proteomes" id="UP000000531">
    <property type="component" value="Chromosome"/>
</dbReference>
<dbReference type="GO" id="GO:0009376">
    <property type="term" value="C:HslUV protease complex"/>
    <property type="evidence" value="ECO:0007669"/>
    <property type="project" value="UniProtKB-UniRule"/>
</dbReference>
<dbReference type="GO" id="GO:0005524">
    <property type="term" value="F:ATP binding"/>
    <property type="evidence" value="ECO:0007669"/>
    <property type="project" value="UniProtKB-UniRule"/>
</dbReference>
<dbReference type="GO" id="GO:0016887">
    <property type="term" value="F:ATP hydrolysis activity"/>
    <property type="evidence" value="ECO:0007669"/>
    <property type="project" value="InterPro"/>
</dbReference>
<dbReference type="GO" id="GO:0008233">
    <property type="term" value="F:peptidase activity"/>
    <property type="evidence" value="ECO:0007669"/>
    <property type="project" value="InterPro"/>
</dbReference>
<dbReference type="GO" id="GO:0036402">
    <property type="term" value="F:proteasome-activating activity"/>
    <property type="evidence" value="ECO:0007669"/>
    <property type="project" value="UniProtKB-UniRule"/>
</dbReference>
<dbReference type="GO" id="GO:0043335">
    <property type="term" value="P:protein unfolding"/>
    <property type="evidence" value="ECO:0007669"/>
    <property type="project" value="UniProtKB-UniRule"/>
</dbReference>
<dbReference type="GO" id="GO:0051603">
    <property type="term" value="P:proteolysis involved in protein catabolic process"/>
    <property type="evidence" value="ECO:0007669"/>
    <property type="project" value="TreeGrafter"/>
</dbReference>
<dbReference type="CDD" id="cd19498">
    <property type="entry name" value="RecA-like_HslU"/>
    <property type="match status" value="1"/>
</dbReference>
<dbReference type="FunFam" id="3.40.50.300:FF:000220">
    <property type="entry name" value="ATP-dependent protease ATPase subunit HslU"/>
    <property type="match status" value="1"/>
</dbReference>
<dbReference type="Gene3D" id="1.10.8.60">
    <property type="match status" value="1"/>
</dbReference>
<dbReference type="Gene3D" id="3.40.50.300">
    <property type="entry name" value="P-loop containing nucleotide triphosphate hydrolases"/>
    <property type="match status" value="2"/>
</dbReference>
<dbReference type="HAMAP" id="MF_00249">
    <property type="entry name" value="HslU"/>
    <property type="match status" value="1"/>
</dbReference>
<dbReference type="InterPro" id="IPR003593">
    <property type="entry name" value="AAA+_ATPase"/>
</dbReference>
<dbReference type="InterPro" id="IPR050052">
    <property type="entry name" value="ATP-dep_Clp_protease_ClpX"/>
</dbReference>
<dbReference type="InterPro" id="IPR003959">
    <property type="entry name" value="ATPase_AAA_core"/>
</dbReference>
<dbReference type="InterPro" id="IPR019489">
    <property type="entry name" value="Clp_ATPase_C"/>
</dbReference>
<dbReference type="InterPro" id="IPR004491">
    <property type="entry name" value="HslU"/>
</dbReference>
<dbReference type="InterPro" id="IPR027417">
    <property type="entry name" value="P-loop_NTPase"/>
</dbReference>
<dbReference type="NCBIfam" id="TIGR00390">
    <property type="entry name" value="hslU"/>
    <property type="match status" value="1"/>
</dbReference>
<dbReference type="NCBIfam" id="NF003544">
    <property type="entry name" value="PRK05201.1"/>
    <property type="match status" value="1"/>
</dbReference>
<dbReference type="PANTHER" id="PTHR48102">
    <property type="entry name" value="ATP-DEPENDENT CLP PROTEASE ATP-BINDING SUBUNIT CLPX-LIKE, MITOCHONDRIAL-RELATED"/>
    <property type="match status" value="1"/>
</dbReference>
<dbReference type="PANTHER" id="PTHR48102:SF3">
    <property type="entry name" value="ATP-DEPENDENT PROTEASE ATPASE SUBUNIT HSLU"/>
    <property type="match status" value="1"/>
</dbReference>
<dbReference type="Pfam" id="PF00004">
    <property type="entry name" value="AAA"/>
    <property type="match status" value="1"/>
</dbReference>
<dbReference type="Pfam" id="PF07724">
    <property type="entry name" value="AAA_2"/>
    <property type="match status" value="1"/>
</dbReference>
<dbReference type="Pfam" id="PF10431">
    <property type="entry name" value="ClpB_D2-small"/>
    <property type="match status" value="1"/>
</dbReference>
<dbReference type="SMART" id="SM00382">
    <property type="entry name" value="AAA"/>
    <property type="match status" value="1"/>
</dbReference>
<dbReference type="SMART" id="SM01086">
    <property type="entry name" value="ClpB_D2-small"/>
    <property type="match status" value="1"/>
</dbReference>
<dbReference type="SUPFAM" id="SSF52540">
    <property type="entry name" value="P-loop containing nucleoside triphosphate hydrolases"/>
    <property type="match status" value="1"/>
</dbReference>
<name>HSLU_STAEQ</name>
<sequence>MDTNGIKLTPKDIVSKLNEYIVGQNDAKRKVAIALRNRYRRSLLKEEEKQEIAPKNILMIGPTGVGKTEIARRMAKIVGAPFIKVEATKFTEVGYVGRDVESMVRDLVDVAVRLVKDEKKSLVKDEATKKANDKLVKLLVPSLKKKAAQGNNPLENLFGGAIPNFGQNQDEEEEPPTEEIKTKRSEIKKQLEQGKLENEKVRIKVEQDPASMGMLGTNQNQQIQDMMNQLMPKKKVEREVSVETARKILADDFADELIDQETANQQALELAEQMGIIFIDEIDKVATNNQNSGQDVSRQGVQRDILPILEGSMIQTKYGTVNTEHMLFIGAGAFHVSKPSDLIPELQGRFPIRVELESLSVEDFVRILTEPKLSLVKQYEALLQTEEVTVNFSEDAIQRLAEIAYQVNQDTDNIGARRLHTILEKMLEDLSFEAPSMPNAVVDITPQYVDDKLKSISTNKDLSAFIL</sequence>
<feature type="chain" id="PRO_0000160554" description="ATP-dependent protease ATPase subunit HslU">
    <location>
        <begin position="1"/>
        <end position="467"/>
    </location>
</feature>
<feature type="region of interest" description="Disordered" evidence="2">
    <location>
        <begin position="166"/>
        <end position="185"/>
    </location>
</feature>
<feature type="binding site" evidence="1">
    <location>
        <position position="22"/>
    </location>
    <ligand>
        <name>ATP</name>
        <dbReference type="ChEBI" id="CHEBI:30616"/>
    </ligand>
</feature>
<feature type="binding site" evidence="1">
    <location>
        <begin position="64"/>
        <end position="69"/>
    </location>
    <ligand>
        <name>ATP</name>
        <dbReference type="ChEBI" id="CHEBI:30616"/>
    </ligand>
</feature>
<feature type="binding site" evidence="1">
    <location>
        <position position="280"/>
    </location>
    <ligand>
        <name>ATP</name>
        <dbReference type="ChEBI" id="CHEBI:30616"/>
    </ligand>
</feature>
<feature type="binding site" evidence="1">
    <location>
        <position position="345"/>
    </location>
    <ligand>
        <name>ATP</name>
        <dbReference type="ChEBI" id="CHEBI:30616"/>
    </ligand>
</feature>
<feature type="binding site" evidence="1">
    <location>
        <position position="417"/>
    </location>
    <ligand>
        <name>ATP</name>
        <dbReference type="ChEBI" id="CHEBI:30616"/>
    </ligand>
</feature>
<protein>
    <recommendedName>
        <fullName evidence="1">ATP-dependent protease ATPase subunit HslU</fullName>
    </recommendedName>
    <alternativeName>
        <fullName evidence="1">Unfoldase HslU</fullName>
    </alternativeName>
</protein>